<keyword id="KW-0963">Cytoplasm</keyword>
<keyword id="KW-0460">Magnesium</keyword>
<keyword id="KW-0479">Metal-binding</keyword>
<keyword id="KW-0548">Nucleotidyltransferase</keyword>
<keyword id="KW-0694">RNA-binding</keyword>
<keyword id="KW-0808">Transferase</keyword>
<sequence length="700" mass="75296">MNPIVKSFEYGQHTVTLETGVIARQADAAVLASMGDTTVLVTVVGKKEADAGRDFFPLTVNYQEKTYAAGKIPGGFFKREGRPSEDETLIARLIDRPIRPLFPNGFKNEVQVIITVVSVDPQIEPDIISMIGTSAALAISGIPFSGPLGAARVGYIDGEYVLNPSVAQLATSQLNLVVAGTAGAVLMVESEAQALPEEVMLGSVVYGHDQQQVVIKAIAEFKAEAGKPTWDWTAPTQDADLVAQIKELAEAGLGDAYKIQVKQDRYAQVSVVKAATKEALLASNPSIDLREVDNLLGSLEKKVVRGRIIRGEPRIDGREPDMIRALSVLAGVLPRTHGSALFTRGETQALVTCTLGTERDAQKIDSIMGERTNRFMLHYNFPPYSVGETGMVGSPKRREIGHGKLAWRGINAVMPSAAEFPYSVRVVSEITESNGSSSMASVCGTSLALMDAGVPIKTSVAGIAMGLVKEGDDFVVLSDILGDEDHLGDMDFKVAGTRDGITALQMDIKIEGITKEIMDIALQQAYGARVHILNVMDQAIGSHRDDISDHAPRITVIKINPEKIRDVIGKGGAVIRALTEETGTTIELEDDGTVKIASSNGEATKEAIRRIEEITSEVEVGRIYNGKVIRIVDFGAFVNILPGKDGLVHISQISDERVANVSDHLELNQEVAVKVMEVDRQGRVRLSIKEAQTKEAAAAE</sequence>
<comment type="function">
    <text evidence="1">Involved in mRNA degradation. Catalyzes the phosphorolysis of single-stranded polyribonucleotides processively in the 3'- to 5'-direction.</text>
</comment>
<comment type="catalytic activity">
    <reaction evidence="1">
        <text>RNA(n+1) + phosphate = RNA(n) + a ribonucleoside 5'-diphosphate</text>
        <dbReference type="Rhea" id="RHEA:22096"/>
        <dbReference type="Rhea" id="RHEA-COMP:14527"/>
        <dbReference type="Rhea" id="RHEA-COMP:17342"/>
        <dbReference type="ChEBI" id="CHEBI:43474"/>
        <dbReference type="ChEBI" id="CHEBI:57930"/>
        <dbReference type="ChEBI" id="CHEBI:140395"/>
        <dbReference type="EC" id="2.7.7.8"/>
    </reaction>
</comment>
<comment type="cofactor">
    <cofactor evidence="1">
        <name>Mg(2+)</name>
        <dbReference type="ChEBI" id="CHEBI:18420"/>
    </cofactor>
</comment>
<comment type="subunit">
    <text evidence="1">Component of the RNA degradosome, which is a multiprotein complex involved in RNA processing and mRNA degradation.</text>
</comment>
<comment type="subcellular location">
    <subcellularLocation>
        <location evidence="1">Cytoplasm</location>
    </subcellularLocation>
</comment>
<comment type="similarity">
    <text evidence="1">Belongs to the polyribonucleotide nucleotidyltransferase family.</text>
</comment>
<proteinExistence type="inferred from homology"/>
<organism>
    <name type="scientific">Shewanella baltica (strain OS185)</name>
    <dbReference type="NCBI Taxonomy" id="402882"/>
    <lineage>
        <taxon>Bacteria</taxon>
        <taxon>Pseudomonadati</taxon>
        <taxon>Pseudomonadota</taxon>
        <taxon>Gammaproteobacteria</taxon>
        <taxon>Alteromonadales</taxon>
        <taxon>Shewanellaceae</taxon>
        <taxon>Shewanella</taxon>
    </lineage>
</organism>
<dbReference type="EC" id="2.7.7.8" evidence="1"/>
<dbReference type="EMBL" id="CP000753">
    <property type="protein sequence ID" value="ABS09402.1"/>
    <property type="molecule type" value="Genomic_DNA"/>
</dbReference>
<dbReference type="RefSeq" id="WP_012089919.1">
    <property type="nucleotide sequence ID" value="NC_009665.1"/>
</dbReference>
<dbReference type="SMR" id="A6WRG3"/>
<dbReference type="KEGG" id="sbm:Shew185_3275"/>
<dbReference type="HOGENOM" id="CLU_004217_2_2_6"/>
<dbReference type="GO" id="GO:0005829">
    <property type="term" value="C:cytosol"/>
    <property type="evidence" value="ECO:0007669"/>
    <property type="project" value="TreeGrafter"/>
</dbReference>
<dbReference type="GO" id="GO:0000175">
    <property type="term" value="F:3'-5'-RNA exonuclease activity"/>
    <property type="evidence" value="ECO:0007669"/>
    <property type="project" value="TreeGrafter"/>
</dbReference>
<dbReference type="GO" id="GO:0000287">
    <property type="term" value="F:magnesium ion binding"/>
    <property type="evidence" value="ECO:0007669"/>
    <property type="project" value="UniProtKB-UniRule"/>
</dbReference>
<dbReference type="GO" id="GO:0004654">
    <property type="term" value="F:polyribonucleotide nucleotidyltransferase activity"/>
    <property type="evidence" value="ECO:0007669"/>
    <property type="project" value="UniProtKB-UniRule"/>
</dbReference>
<dbReference type="GO" id="GO:0003723">
    <property type="term" value="F:RNA binding"/>
    <property type="evidence" value="ECO:0007669"/>
    <property type="project" value="UniProtKB-UniRule"/>
</dbReference>
<dbReference type="GO" id="GO:0006402">
    <property type="term" value="P:mRNA catabolic process"/>
    <property type="evidence" value="ECO:0007669"/>
    <property type="project" value="UniProtKB-UniRule"/>
</dbReference>
<dbReference type="GO" id="GO:0006396">
    <property type="term" value="P:RNA processing"/>
    <property type="evidence" value="ECO:0007669"/>
    <property type="project" value="InterPro"/>
</dbReference>
<dbReference type="CDD" id="cd02393">
    <property type="entry name" value="KH-I_PNPase"/>
    <property type="match status" value="1"/>
</dbReference>
<dbReference type="CDD" id="cd11363">
    <property type="entry name" value="RNase_PH_PNPase_1"/>
    <property type="match status" value="1"/>
</dbReference>
<dbReference type="CDD" id="cd11364">
    <property type="entry name" value="RNase_PH_PNPase_2"/>
    <property type="match status" value="1"/>
</dbReference>
<dbReference type="CDD" id="cd04472">
    <property type="entry name" value="S1_PNPase"/>
    <property type="match status" value="1"/>
</dbReference>
<dbReference type="FunFam" id="2.40.50.140:FF:000023">
    <property type="entry name" value="Polyribonucleotide nucleotidyltransferase"/>
    <property type="match status" value="1"/>
</dbReference>
<dbReference type="FunFam" id="3.30.1370.10:FF:000001">
    <property type="entry name" value="Polyribonucleotide nucleotidyltransferase"/>
    <property type="match status" value="1"/>
</dbReference>
<dbReference type="FunFam" id="3.30.230.70:FF:000001">
    <property type="entry name" value="Polyribonucleotide nucleotidyltransferase"/>
    <property type="match status" value="1"/>
</dbReference>
<dbReference type="FunFam" id="3.30.230.70:FF:000002">
    <property type="entry name" value="Polyribonucleotide nucleotidyltransferase"/>
    <property type="match status" value="1"/>
</dbReference>
<dbReference type="Gene3D" id="3.30.230.70">
    <property type="entry name" value="GHMP Kinase, N-terminal domain"/>
    <property type="match status" value="2"/>
</dbReference>
<dbReference type="Gene3D" id="3.30.1370.10">
    <property type="entry name" value="K Homology domain, type 1"/>
    <property type="match status" value="1"/>
</dbReference>
<dbReference type="Gene3D" id="2.40.50.140">
    <property type="entry name" value="Nucleic acid-binding proteins"/>
    <property type="match status" value="1"/>
</dbReference>
<dbReference type="HAMAP" id="MF_01595">
    <property type="entry name" value="PNPase"/>
    <property type="match status" value="1"/>
</dbReference>
<dbReference type="InterPro" id="IPR001247">
    <property type="entry name" value="ExoRNase_PH_dom1"/>
</dbReference>
<dbReference type="InterPro" id="IPR015847">
    <property type="entry name" value="ExoRNase_PH_dom2"/>
</dbReference>
<dbReference type="InterPro" id="IPR036345">
    <property type="entry name" value="ExoRNase_PH_dom2_sf"/>
</dbReference>
<dbReference type="InterPro" id="IPR004087">
    <property type="entry name" value="KH_dom"/>
</dbReference>
<dbReference type="InterPro" id="IPR004088">
    <property type="entry name" value="KH_dom_type_1"/>
</dbReference>
<dbReference type="InterPro" id="IPR036612">
    <property type="entry name" value="KH_dom_type_1_sf"/>
</dbReference>
<dbReference type="InterPro" id="IPR012340">
    <property type="entry name" value="NA-bd_OB-fold"/>
</dbReference>
<dbReference type="InterPro" id="IPR012162">
    <property type="entry name" value="PNPase"/>
</dbReference>
<dbReference type="InterPro" id="IPR027408">
    <property type="entry name" value="PNPase/RNase_PH_dom_sf"/>
</dbReference>
<dbReference type="InterPro" id="IPR015848">
    <property type="entry name" value="PNPase_PH_RNA-bd_bac/org-type"/>
</dbReference>
<dbReference type="InterPro" id="IPR036456">
    <property type="entry name" value="PNPase_PH_RNA-bd_sf"/>
</dbReference>
<dbReference type="InterPro" id="IPR020568">
    <property type="entry name" value="Ribosomal_Su5_D2-typ_SF"/>
</dbReference>
<dbReference type="InterPro" id="IPR003029">
    <property type="entry name" value="S1_domain"/>
</dbReference>
<dbReference type="NCBIfam" id="TIGR03591">
    <property type="entry name" value="polynuc_phos"/>
    <property type="match status" value="1"/>
</dbReference>
<dbReference type="NCBIfam" id="NF008805">
    <property type="entry name" value="PRK11824.1"/>
    <property type="match status" value="1"/>
</dbReference>
<dbReference type="PANTHER" id="PTHR11252">
    <property type="entry name" value="POLYRIBONUCLEOTIDE NUCLEOTIDYLTRANSFERASE"/>
    <property type="match status" value="1"/>
</dbReference>
<dbReference type="PANTHER" id="PTHR11252:SF0">
    <property type="entry name" value="POLYRIBONUCLEOTIDE NUCLEOTIDYLTRANSFERASE 1, MITOCHONDRIAL"/>
    <property type="match status" value="1"/>
</dbReference>
<dbReference type="Pfam" id="PF00013">
    <property type="entry name" value="KH_1"/>
    <property type="match status" value="1"/>
</dbReference>
<dbReference type="Pfam" id="PF03726">
    <property type="entry name" value="PNPase"/>
    <property type="match status" value="1"/>
</dbReference>
<dbReference type="Pfam" id="PF01138">
    <property type="entry name" value="RNase_PH"/>
    <property type="match status" value="2"/>
</dbReference>
<dbReference type="Pfam" id="PF03725">
    <property type="entry name" value="RNase_PH_C"/>
    <property type="match status" value="2"/>
</dbReference>
<dbReference type="Pfam" id="PF00575">
    <property type="entry name" value="S1"/>
    <property type="match status" value="1"/>
</dbReference>
<dbReference type="PIRSF" id="PIRSF005499">
    <property type="entry name" value="PNPase"/>
    <property type="match status" value="1"/>
</dbReference>
<dbReference type="SMART" id="SM00322">
    <property type="entry name" value="KH"/>
    <property type="match status" value="1"/>
</dbReference>
<dbReference type="SMART" id="SM00316">
    <property type="entry name" value="S1"/>
    <property type="match status" value="1"/>
</dbReference>
<dbReference type="SUPFAM" id="SSF54791">
    <property type="entry name" value="Eukaryotic type KH-domain (KH-domain type I)"/>
    <property type="match status" value="1"/>
</dbReference>
<dbReference type="SUPFAM" id="SSF50249">
    <property type="entry name" value="Nucleic acid-binding proteins"/>
    <property type="match status" value="1"/>
</dbReference>
<dbReference type="SUPFAM" id="SSF46915">
    <property type="entry name" value="Polynucleotide phosphorylase/guanosine pentaphosphate synthase (PNPase/GPSI), domain 3"/>
    <property type="match status" value="1"/>
</dbReference>
<dbReference type="SUPFAM" id="SSF55666">
    <property type="entry name" value="Ribonuclease PH domain 2-like"/>
    <property type="match status" value="2"/>
</dbReference>
<dbReference type="SUPFAM" id="SSF54211">
    <property type="entry name" value="Ribosomal protein S5 domain 2-like"/>
    <property type="match status" value="2"/>
</dbReference>
<dbReference type="PROSITE" id="PS50084">
    <property type="entry name" value="KH_TYPE_1"/>
    <property type="match status" value="1"/>
</dbReference>
<dbReference type="PROSITE" id="PS50126">
    <property type="entry name" value="S1"/>
    <property type="match status" value="1"/>
</dbReference>
<gene>
    <name evidence="1" type="primary">pnp</name>
    <name type="ordered locus">Shew185_3275</name>
</gene>
<feature type="chain" id="PRO_0000329838" description="Polyribonucleotide nucleotidyltransferase">
    <location>
        <begin position="1"/>
        <end position="700"/>
    </location>
</feature>
<feature type="domain" description="KH" evidence="1">
    <location>
        <begin position="552"/>
        <end position="611"/>
    </location>
</feature>
<feature type="domain" description="S1 motif" evidence="1">
    <location>
        <begin position="621"/>
        <end position="689"/>
    </location>
</feature>
<feature type="binding site" evidence="1">
    <location>
        <position position="485"/>
    </location>
    <ligand>
        <name>Mg(2+)</name>
        <dbReference type="ChEBI" id="CHEBI:18420"/>
    </ligand>
</feature>
<feature type="binding site" evidence="1">
    <location>
        <position position="491"/>
    </location>
    <ligand>
        <name>Mg(2+)</name>
        <dbReference type="ChEBI" id="CHEBI:18420"/>
    </ligand>
</feature>
<protein>
    <recommendedName>
        <fullName evidence="1">Polyribonucleotide nucleotidyltransferase</fullName>
        <ecNumber evidence="1">2.7.7.8</ecNumber>
    </recommendedName>
    <alternativeName>
        <fullName evidence="1">Polynucleotide phosphorylase</fullName>
        <shortName evidence="1">PNPase</shortName>
    </alternativeName>
</protein>
<accession>A6WRG3</accession>
<reference key="1">
    <citation type="submission" date="2007-07" db="EMBL/GenBank/DDBJ databases">
        <title>Complete sequence of chromosome of Shewanella baltica OS185.</title>
        <authorList>
            <consortium name="US DOE Joint Genome Institute"/>
            <person name="Copeland A."/>
            <person name="Lucas S."/>
            <person name="Lapidus A."/>
            <person name="Barry K."/>
            <person name="Glavina del Rio T."/>
            <person name="Dalin E."/>
            <person name="Tice H."/>
            <person name="Pitluck S."/>
            <person name="Sims D."/>
            <person name="Brettin T."/>
            <person name="Bruce D."/>
            <person name="Detter J.C."/>
            <person name="Han C."/>
            <person name="Schmutz J."/>
            <person name="Larimer F."/>
            <person name="Land M."/>
            <person name="Hauser L."/>
            <person name="Kyrpides N."/>
            <person name="Mikhailova N."/>
            <person name="Brettar I."/>
            <person name="Rodrigues J."/>
            <person name="Konstantinidis K."/>
            <person name="Tiedje J."/>
            <person name="Richardson P."/>
        </authorList>
    </citation>
    <scope>NUCLEOTIDE SEQUENCE [LARGE SCALE GENOMIC DNA]</scope>
    <source>
        <strain>OS185</strain>
    </source>
</reference>
<name>PNP_SHEB8</name>
<evidence type="ECO:0000255" key="1">
    <source>
        <dbReference type="HAMAP-Rule" id="MF_01595"/>
    </source>
</evidence>